<proteinExistence type="inferred from homology"/>
<evidence type="ECO:0000250" key="1"/>
<evidence type="ECO:0000255" key="2">
    <source>
        <dbReference type="PROSITE-ProRule" id="PRU00690"/>
    </source>
</evidence>
<evidence type="ECO:0000256" key="3">
    <source>
        <dbReference type="SAM" id="MobiDB-lite"/>
    </source>
</evidence>
<evidence type="ECO:0000305" key="4"/>
<accession>Q2UC04</accession>
<feature type="chain" id="PRO_0000350976" description="Nucleolar protein 58">
    <location>
        <begin position="1"/>
        <end position="578"/>
    </location>
</feature>
<feature type="domain" description="Nop" evidence="2">
    <location>
        <begin position="285"/>
        <end position="410"/>
    </location>
</feature>
<feature type="region of interest" description="Disordered" evidence="3">
    <location>
        <begin position="443"/>
        <end position="578"/>
    </location>
</feature>
<feature type="compositionally biased region" description="Acidic residues" evidence="3">
    <location>
        <begin position="462"/>
        <end position="485"/>
    </location>
</feature>
<feature type="compositionally biased region" description="Basic and acidic residues" evidence="3">
    <location>
        <begin position="495"/>
        <end position="505"/>
    </location>
</feature>
<feature type="compositionally biased region" description="Basic and acidic residues" evidence="3">
    <location>
        <begin position="547"/>
        <end position="561"/>
    </location>
</feature>
<feature type="compositionally biased region" description="Basic residues" evidence="3">
    <location>
        <begin position="569"/>
        <end position="578"/>
    </location>
</feature>
<name>NOP58_ASPOR</name>
<gene>
    <name type="primary">nop58</name>
    <name type="ORF">AO090012000796</name>
</gene>
<reference key="1">
    <citation type="journal article" date="2005" name="Nature">
        <title>Genome sequencing and analysis of Aspergillus oryzae.</title>
        <authorList>
            <person name="Machida M."/>
            <person name="Asai K."/>
            <person name="Sano M."/>
            <person name="Tanaka T."/>
            <person name="Kumagai T."/>
            <person name="Terai G."/>
            <person name="Kusumoto K."/>
            <person name="Arima T."/>
            <person name="Akita O."/>
            <person name="Kashiwagi Y."/>
            <person name="Abe K."/>
            <person name="Gomi K."/>
            <person name="Horiuchi H."/>
            <person name="Kitamoto K."/>
            <person name="Kobayashi T."/>
            <person name="Takeuchi M."/>
            <person name="Denning D.W."/>
            <person name="Galagan J.E."/>
            <person name="Nierman W.C."/>
            <person name="Yu J."/>
            <person name="Archer D.B."/>
            <person name="Bennett J.W."/>
            <person name="Bhatnagar D."/>
            <person name="Cleveland T.E."/>
            <person name="Fedorova N.D."/>
            <person name="Gotoh O."/>
            <person name="Horikawa H."/>
            <person name="Hosoyama A."/>
            <person name="Ichinomiya M."/>
            <person name="Igarashi R."/>
            <person name="Iwashita K."/>
            <person name="Juvvadi P.R."/>
            <person name="Kato M."/>
            <person name="Kato Y."/>
            <person name="Kin T."/>
            <person name="Kokubun A."/>
            <person name="Maeda H."/>
            <person name="Maeyama N."/>
            <person name="Maruyama J."/>
            <person name="Nagasaki H."/>
            <person name="Nakajima T."/>
            <person name="Oda K."/>
            <person name="Okada K."/>
            <person name="Paulsen I."/>
            <person name="Sakamoto K."/>
            <person name="Sawano T."/>
            <person name="Takahashi M."/>
            <person name="Takase K."/>
            <person name="Terabayashi Y."/>
            <person name="Wortman J.R."/>
            <person name="Yamada O."/>
            <person name="Yamagata Y."/>
            <person name="Anazawa H."/>
            <person name="Hata Y."/>
            <person name="Koide Y."/>
            <person name="Komori T."/>
            <person name="Koyama Y."/>
            <person name="Minetoki T."/>
            <person name="Suharnan S."/>
            <person name="Tanaka A."/>
            <person name="Isono K."/>
            <person name="Kuhara S."/>
            <person name="Ogasawara N."/>
            <person name="Kikuchi H."/>
        </authorList>
    </citation>
    <scope>NUCLEOTIDE SEQUENCE [LARGE SCALE GENOMIC DNA]</scope>
    <source>
        <strain>ATCC 42149 / RIB 40</strain>
    </source>
</reference>
<keyword id="KW-0539">Nucleus</keyword>
<keyword id="KW-1185">Reference proteome</keyword>
<keyword id="KW-0687">Ribonucleoprotein</keyword>
<keyword id="KW-0690">Ribosome biogenesis</keyword>
<keyword id="KW-0698">rRNA processing</keyword>
<organism>
    <name type="scientific">Aspergillus oryzae (strain ATCC 42149 / RIB 40)</name>
    <name type="common">Yellow koji mold</name>
    <dbReference type="NCBI Taxonomy" id="510516"/>
    <lineage>
        <taxon>Eukaryota</taxon>
        <taxon>Fungi</taxon>
        <taxon>Dikarya</taxon>
        <taxon>Ascomycota</taxon>
        <taxon>Pezizomycotina</taxon>
        <taxon>Eurotiomycetes</taxon>
        <taxon>Eurotiomycetidae</taxon>
        <taxon>Eurotiales</taxon>
        <taxon>Aspergillaceae</taxon>
        <taxon>Aspergillus</taxon>
        <taxon>Aspergillus subgen. Circumdati</taxon>
    </lineage>
</organism>
<sequence>MTLFILTETSAGYALLKAKDKKLLKRDDLATEAATAEGVSNLVKLKSFQKFDSAATALEEVASLVEGKVTPRLASLLDEVKDEKKVSLAVADPKLGNAIGKLPGLDIQLIADSTTTDIYRAIREHLPTLIPGLAPQDMSTMSLGLSHSLARHKLKFSPDKIDTMIVQAIGLLDDLDKELNNYAMRVKEWYGWHFPELAKILNDNLAYAKLVLKMGMRTNWESSDLAEILPEELEGSVKAAADRSMGTEISEEDLENIQALAEQVVGFTEYRQQLAGYLTARMNAIAPNLTALVGELVGARLIAHAGSLTNLSKSPASTLQILGAEKALFRALKTKHDTPKYGLIYHASLIGQATGKNKGKMARVLAAKASLGIRVDALAEWDEDATEEDKAALGIEARFNLERKLAGMEGKPLKPRGVTIAPNGTPAQAKKFELNEARKYNADADAVDEPSSAKKQKKLVEEVQDTEMADADSDAEADSSDESEEESSKKKSKKSKDADLEKMAEKAGLSLKRYKRKLERGEIEFDAEGNPSSISKKDLKKAKKEAKKADKGEEKKRKRSDDNEDNEKKQKKKKKKDE</sequence>
<comment type="function">
    <text evidence="1">Required for pre-18S rRNA processing. May bind microtubules (By similarity).</text>
</comment>
<comment type="subcellular location">
    <subcellularLocation>
        <location evidence="1">Nucleus</location>
        <location evidence="1">Nucleolus</location>
    </subcellularLocation>
</comment>
<comment type="similarity">
    <text evidence="4">Belongs to the NOP5/NOP56 family.</text>
</comment>
<protein>
    <recommendedName>
        <fullName>Nucleolar protein 58</fullName>
    </recommendedName>
</protein>
<dbReference type="EMBL" id="BA000052">
    <property type="protein sequence ID" value="BAE60911.1"/>
    <property type="molecule type" value="Genomic_DNA"/>
</dbReference>
<dbReference type="RefSeq" id="XP_001727750.1">
    <property type="nucleotide sequence ID" value="XM_001727698.2"/>
</dbReference>
<dbReference type="SMR" id="Q2UC04"/>
<dbReference type="STRING" id="510516.Q2UC04"/>
<dbReference type="EnsemblFungi" id="BAE60911">
    <property type="protein sequence ID" value="BAE60911"/>
    <property type="gene ID" value="AO090012000796"/>
</dbReference>
<dbReference type="GeneID" id="5988224"/>
<dbReference type="KEGG" id="aor:AO090012000796"/>
<dbReference type="VEuPathDB" id="FungiDB:AO090012000796"/>
<dbReference type="HOGENOM" id="CLU_015495_5_0_1"/>
<dbReference type="OMA" id="MGMRSNW"/>
<dbReference type="OrthoDB" id="104947at5052"/>
<dbReference type="Proteomes" id="UP000006564">
    <property type="component" value="Chromosome 4"/>
</dbReference>
<dbReference type="GO" id="GO:0031428">
    <property type="term" value="C:box C/D methylation guide snoRNP complex"/>
    <property type="evidence" value="ECO:0007669"/>
    <property type="project" value="EnsemblFungi"/>
</dbReference>
<dbReference type="GO" id="GO:0005730">
    <property type="term" value="C:nucleolus"/>
    <property type="evidence" value="ECO:0007669"/>
    <property type="project" value="UniProtKB-SubCell"/>
</dbReference>
<dbReference type="GO" id="GO:0032040">
    <property type="term" value="C:small-subunit processome"/>
    <property type="evidence" value="ECO:0007669"/>
    <property type="project" value="EnsemblFungi"/>
</dbReference>
<dbReference type="GO" id="GO:0030515">
    <property type="term" value="F:snoRNA binding"/>
    <property type="evidence" value="ECO:0007669"/>
    <property type="project" value="InterPro"/>
</dbReference>
<dbReference type="GO" id="GO:0017069">
    <property type="term" value="F:snRNA binding"/>
    <property type="evidence" value="ECO:0007669"/>
    <property type="project" value="EnsemblFungi"/>
</dbReference>
<dbReference type="GO" id="GO:0000494">
    <property type="term" value="P:box C/D sno(s)RNA 3'-end processing"/>
    <property type="evidence" value="ECO:0007669"/>
    <property type="project" value="EnsemblFungi"/>
</dbReference>
<dbReference type="GO" id="GO:0000480">
    <property type="term" value="P:endonucleolytic cleavage in 5'-ETS of tricistronic rRNA transcript (SSU-rRNA, 5.8S rRNA, LSU-rRNA)"/>
    <property type="evidence" value="ECO:0007669"/>
    <property type="project" value="EnsemblFungi"/>
</dbReference>
<dbReference type="GO" id="GO:0000447">
    <property type="term" value="P:endonucleolytic cleavage in ITS1 to separate SSU-rRNA from 5.8S rRNA and LSU-rRNA from tricistronic rRNA transcript (SSU-rRNA, 5.8S rRNA, LSU-rRNA)"/>
    <property type="evidence" value="ECO:0007669"/>
    <property type="project" value="EnsemblFungi"/>
</dbReference>
<dbReference type="GO" id="GO:0000472">
    <property type="term" value="P:endonucleolytic cleavage to generate mature 5'-end of SSU-rRNA from (SSU-rRNA, 5.8S rRNA, LSU-rRNA)"/>
    <property type="evidence" value="ECO:0007669"/>
    <property type="project" value="EnsemblFungi"/>
</dbReference>
<dbReference type="GO" id="GO:1902570">
    <property type="term" value="P:protein localization to nucleolus"/>
    <property type="evidence" value="ECO:0007669"/>
    <property type="project" value="EnsemblFungi"/>
</dbReference>
<dbReference type="GO" id="GO:0000452">
    <property type="term" value="P:snoRNA guided rRNA 2'-O-methylation"/>
    <property type="evidence" value="ECO:0007669"/>
    <property type="project" value="EnsemblFungi"/>
</dbReference>
<dbReference type="FunFam" id="1.10.246.90:FF:000003">
    <property type="entry name" value="Nucleolar protein 58"/>
    <property type="match status" value="1"/>
</dbReference>
<dbReference type="FunFam" id="1.10.287.4070:FF:000001">
    <property type="entry name" value="Probable Nucleolar protein 58"/>
    <property type="match status" value="1"/>
</dbReference>
<dbReference type="Gene3D" id="1.10.287.4070">
    <property type="match status" value="1"/>
</dbReference>
<dbReference type="Gene3D" id="1.10.246.90">
    <property type="entry name" value="Nop domain"/>
    <property type="match status" value="1"/>
</dbReference>
<dbReference type="InterPro" id="IPR045056">
    <property type="entry name" value="Nop56/Nop58"/>
</dbReference>
<dbReference type="InterPro" id="IPR012974">
    <property type="entry name" value="NOP58/56_N"/>
</dbReference>
<dbReference type="InterPro" id="IPR042239">
    <property type="entry name" value="Nop_C"/>
</dbReference>
<dbReference type="InterPro" id="IPR002687">
    <property type="entry name" value="Nop_dom"/>
</dbReference>
<dbReference type="InterPro" id="IPR036070">
    <property type="entry name" value="Nop_dom_sf"/>
</dbReference>
<dbReference type="InterPro" id="IPR012976">
    <property type="entry name" value="NOSIC"/>
</dbReference>
<dbReference type="PANTHER" id="PTHR10894">
    <property type="entry name" value="NUCLEOLAR PROTEIN 5 NUCLEOLAR PROTEIN NOP5 NOP58"/>
    <property type="match status" value="1"/>
</dbReference>
<dbReference type="PANTHER" id="PTHR10894:SF1">
    <property type="entry name" value="NUCLEOLAR PROTEIN 58"/>
    <property type="match status" value="1"/>
</dbReference>
<dbReference type="Pfam" id="PF01798">
    <property type="entry name" value="Nop"/>
    <property type="match status" value="1"/>
</dbReference>
<dbReference type="Pfam" id="PF08156">
    <property type="entry name" value="NOP5NT"/>
    <property type="match status" value="1"/>
</dbReference>
<dbReference type="SMART" id="SM00931">
    <property type="entry name" value="NOSIC"/>
    <property type="match status" value="1"/>
</dbReference>
<dbReference type="SUPFAM" id="SSF89124">
    <property type="entry name" value="Nop domain"/>
    <property type="match status" value="1"/>
</dbReference>
<dbReference type="PROSITE" id="PS51358">
    <property type="entry name" value="NOP"/>
    <property type="match status" value="1"/>
</dbReference>